<name>MICA3_HUMAN</name>
<gene>
    <name type="primary">MICAL3</name>
    <name type="synonym">KIAA0819</name>
    <name type="synonym">KIAA1364</name>
</gene>
<keyword id="KW-0002">3D-structure</keyword>
<keyword id="KW-0009">Actin-binding</keyword>
<keyword id="KW-0025">Alternative splicing</keyword>
<keyword id="KW-0131">Cell cycle</keyword>
<keyword id="KW-0132">Cell division</keyword>
<keyword id="KW-0966">Cell projection</keyword>
<keyword id="KW-0175">Coiled coil</keyword>
<keyword id="KW-0963">Cytoplasm</keyword>
<keyword id="KW-0206">Cytoskeleton</keyword>
<keyword id="KW-0268">Exocytosis</keyword>
<keyword id="KW-0274">FAD</keyword>
<keyword id="KW-0285">Flavoprotein</keyword>
<keyword id="KW-0440">LIM domain</keyword>
<keyword id="KW-0479">Metal-binding</keyword>
<keyword id="KW-0503">Monooxygenase</keyword>
<keyword id="KW-0521">NADP</keyword>
<keyword id="KW-0539">Nucleus</keyword>
<keyword id="KW-0560">Oxidoreductase</keyword>
<keyword id="KW-0597">Phosphoprotein</keyword>
<keyword id="KW-1267">Proteomics identification</keyword>
<keyword id="KW-1185">Reference proteome</keyword>
<keyword id="KW-0862">Zinc</keyword>
<accession>Q7RTP6</accession>
<accession>B2RXJ5</accession>
<accession>E9PEF0</accession>
<accession>O94909</accession>
<accession>Q5U4P4</accession>
<accession>Q6ICK4</accession>
<accession>Q96DF2</accession>
<accession>Q9P2I3</accession>
<proteinExistence type="evidence at protein level"/>
<feature type="chain" id="PRO_0000075846" description="[F-actin]-monooxygenase MICAL3">
    <location>
        <begin position="1"/>
        <end position="2002"/>
    </location>
</feature>
<feature type="domain" description="Calponin-homology (CH)" evidence="6">
    <location>
        <begin position="518"/>
        <end position="624"/>
    </location>
</feature>
<feature type="domain" description="LIM zinc-binding" evidence="7">
    <location>
        <begin position="762"/>
        <end position="824"/>
    </location>
</feature>
<feature type="domain" description="bMERB" evidence="8">
    <location>
        <begin position="1841"/>
        <end position="1990"/>
    </location>
</feature>
<feature type="region of interest" description="Monooxygenase domain" evidence="4">
    <location>
        <begin position="2"/>
        <end position="494"/>
    </location>
</feature>
<feature type="region of interest" description="Disordered" evidence="9">
    <location>
        <begin position="658"/>
        <end position="706"/>
    </location>
</feature>
<feature type="region of interest" description="Disordered" evidence="9">
    <location>
        <begin position="835"/>
        <end position="883"/>
    </location>
</feature>
<feature type="region of interest" description="Disordered" evidence="9">
    <location>
        <begin position="907"/>
        <end position="1313"/>
    </location>
</feature>
<feature type="region of interest" description="Disordered" evidence="9">
    <location>
        <begin position="1335"/>
        <end position="1776"/>
    </location>
</feature>
<feature type="region of interest" description="Disordered" evidence="9">
    <location>
        <begin position="1791"/>
        <end position="1821"/>
    </location>
</feature>
<feature type="coiled-coil region" evidence="5">
    <location>
        <begin position="1821"/>
        <end position="1992"/>
    </location>
</feature>
<feature type="short sequence motif" description="Nuclear localization signal" evidence="12">
    <location>
        <begin position="663"/>
        <end position="684"/>
    </location>
</feature>
<feature type="compositionally biased region" description="Basic and acidic residues" evidence="9">
    <location>
        <begin position="669"/>
        <end position="679"/>
    </location>
</feature>
<feature type="compositionally biased region" description="Acidic residues" evidence="9">
    <location>
        <begin position="938"/>
        <end position="950"/>
    </location>
</feature>
<feature type="compositionally biased region" description="Acidic residues" evidence="9">
    <location>
        <begin position="991"/>
        <end position="1017"/>
    </location>
</feature>
<feature type="compositionally biased region" description="Basic and acidic residues" evidence="9">
    <location>
        <begin position="1041"/>
        <end position="1054"/>
    </location>
</feature>
<feature type="compositionally biased region" description="Low complexity" evidence="9">
    <location>
        <begin position="1055"/>
        <end position="1066"/>
    </location>
</feature>
<feature type="compositionally biased region" description="Acidic residues" evidence="9">
    <location>
        <begin position="1068"/>
        <end position="1102"/>
    </location>
</feature>
<feature type="compositionally biased region" description="Polar residues" evidence="9">
    <location>
        <begin position="1150"/>
        <end position="1163"/>
    </location>
</feature>
<feature type="compositionally biased region" description="Basic and acidic residues" evidence="9">
    <location>
        <begin position="1191"/>
        <end position="1218"/>
    </location>
</feature>
<feature type="compositionally biased region" description="Pro residues" evidence="9">
    <location>
        <begin position="1239"/>
        <end position="1258"/>
    </location>
</feature>
<feature type="compositionally biased region" description="Polar residues" evidence="9">
    <location>
        <begin position="1268"/>
        <end position="1280"/>
    </location>
</feature>
<feature type="compositionally biased region" description="Polar residues" evidence="9">
    <location>
        <begin position="1288"/>
        <end position="1302"/>
    </location>
</feature>
<feature type="compositionally biased region" description="Basic and acidic residues" evidence="9">
    <location>
        <begin position="1407"/>
        <end position="1422"/>
    </location>
</feature>
<feature type="compositionally biased region" description="Low complexity" evidence="9">
    <location>
        <begin position="1423"/>
        <end position="1435"/>
    </location>
</feature>
<feature type="compositionally biased region" description="Polar residues" evidence="9">
    <location>
        <begin position="1436"/>
        <end position="1451"/>
    </location>
</feature>
<feature type="compositionally biased region" description="Pro residues" evidence="9">
    <location>
        <begin position="1456"/>
        <end position="1467"/>
    </location>
</feature>
<feature type="compositionally biased region" description="Acidic residues" evidence="9">
    <location>
        <begin position="1516"/>
        <end position="1530"/>
    </location>
</feature>
<feature type="compositionally biased region" description="Basic and acidic residues" evidence="9">
    <location>
        <begin position="1588"/>
        <end position="1604"/>
    </location>
</feature>
<feature type="compositionally biased region" description="Basic and acidic residues" evidence="9">
    <location>
        <begin position="1657"/>
        <end position="1668"/>
    </location>
</feature>
<feature type="compositionally biased region" description="Low complexity" evidence="9">
    <location>
        <begin position="1674"/>
        <end position="1694"/>
    </location>
</feature>
<feature type="compositionally biased region" description="Basic residues" evidence="9">
    <location>
        <begin position="1695"/>
        <end position="1713"/>
    </location>
</feature>
<feature type="compositionally biased region" description="Polar residues" evidence="9">
    <location>
        <begin position="1760"/>
        <end position="1769"/>
    </location>
</feature>
<feature type="compositionally biased region" description="Basic and acidic residues" evidence="9">
    <location>
        <begin position="1804"/>
        <end position="1820"/>
    </location>
</feature>
<feature type="binding site" evidence="4">
    <location>
        <position position="97"/>
    </location>
    <ligand>
        <name>FAD</name>
        <dbReference type="ChEBI" id="CHEBI:57692"/>
    </ligand>
</feature>
<feature type="binding site" evidence="4">
    <location>
        <begin position="116"/>
        <end position="118"/>
    </location>
    <ligand>
        <name>FAD</name>
        <dbReference type="ChEBI" id="CHEBI:57692"/>
    </ligand>
</feature>
<feature type="binding site" evidence="4">
    <location>
        <begin position="123"/>
        <end position="125"/>
    </location>
    <ligand>
        <name>FAD</name>
        <dbReference type="ChEBI" id="CHEBI:57692"/>
    </ligand>
</feature>
<feature type="binding site" evidence="4">
    <location>
        <position position="183"/>
    </location>
    <ligand>
        <name>FAD</name>
        <dbReference type="ChEBI" id="CHEBI:57692"/>
    </ligand>
</feature>
<feature type="binding site" evidence="4">
    <location>
        <position position="298"/>
    </location>
    <ligand>
        <name>FAD</name>
        <dbReference type="ChEBI" id="CHEBI:57692"/>
    </ligand>
</feature>
<feature type="binding site" evidence="4">
    <location>
        <position position="398"/>
    </location>
    <ligand>
        <name>FAD</name>
        <dbReference type="ChEBI" id="CHEBI:57692"/>
    </ligand>
</feature>
<feature type="binding site" evidence="3">
    <location>
        <position position="764"/>
    </location>
    <ligand>
        <name>Zn(2+)</name>
        <dbReference type="ChEBI" id="CHEBI:29105"/>
        <label>1</label>
    </ligand>
</feature>
<feature type="binding site" evidence="3">
    <location>
        <position position="767"/>
    </location>
    <ligand>
        <name>Zn(2+)</name>
        <dbReference type="ChEBI" id="CHEBI:29105"/>
        <label>1</label>
    </ligand>
</feature>
<feature type="binding site" evidence="3">
    <location>
        <position position="785"/>
    </location>
    <ligand>
        <name>Zn(2+)</name>
        <dbReference type="ChEBI" id="CHEBI:29105"/>
        <label>1</label>
    </ligand>
</feature>
<feature type="binding site" evidence="3">
    <location>
        <position position="788"/>
    </location>
    <ligand>
        <name>Zn(2+)</name>
        <dbReference type="ChEBI" id="CHEBI:29105"/>
        <label>1</label>
    </ligand>
</feature>
<feature type="binding site" evidence="3">
    <location>
        <position position="791"/>
    </location>
    <ligand>
        <name>Zn(2+)</name>
        <dbReference type="ChEBI" id="CHEBI:29105"/>
        <label>2</label>
    </ligand>
</feature>
<feature type="binding site" evidence="3">
    <location>
        <position position="794"/>
    </location>
    <ligand>
        <name>Zn(2+)</name>
        <dbReference type="ChEBI" id="CHEBI:29105"/>
        <label>2</label>
    </ligand>
</feature>
<feature type="binding site" evidence="3">
    <location>
        <position position="814"/>
    </location>
    <ligand>
        <name>Zn(2+)</name>
        <dbReference type="ChEBI" id="CHEBI:29105"/>
        <label>2</label>
    </ligand>
</feature>
<feature type="binding site" evidence="3">
    <location>
        <position position="817"/>
    </location>
    <ligand>
        <name>Zn(2+)</name>
        <dbReference type="ChEBI" id="CHEBI:29105"/>
        <label>2</label>
    </ligand>
</feature>
<feature type="modified residue" description="Phosphoserine" evidence="24 26 28">
    <location>
        <position position="649"/>
    </location>
</feature>
<feature type="modified residue" description="Phosphoserine" evidence="2">
    <location>
        <position position="685"/>
    </location>
</feature>
<feature type="modified residue" description="Phosphoserine" evidence="2">
    <location>
        <position position="687"/>
    </location>
</feature>
<feature type="modified residue" description="Phosphothreonine" evidence="24 28">
    <location>
        <position position="887"/>
    </location>
</feature>
<feature type="modified residue" description="Phosphoserine" evidence="2">
    <location>
        <position position="977"/>
    </location>
</feature>
<feature type="modified residue" description="Phosphoserine" evidence="29">
    <location>
        <position position="1134"/>
    </location>
</feature>
<feature type="modified residue" description="Phosphoserine" evidence="28">
    <location>
        <position position="1143"/>
    </location>
</feature>
<feature type="modified residue" description="Phosphoserine" evidence="29">
    <location>
        <position position="1160"/>
    </location>
</feature>
<feature type="modified residue" description="Phosphoserine" evidence="2">
    <location>
        <position position="1192"/>
    </location>
</feature>
<feature type="modified residue" description="Phosphoserine" evidence="29">
    <location>
        <position position="1274"/>
    </location>
</feature>
<feature type="modified residue" description="Phosphothreonine" evidence="29">
    <location>
        <position position="1276"/>
    </location>
</feature>
<feature type="modified residue" description="Phosphoserine" evidence="29">
    <location>
        <position position="1278"/>
    </location>
</feature>
<feature type="modified residue" description="Phosphoserine" evidence="23 25 28">
    <location>
        <position position="1310"/>
    </location>
</feature>
<feature type="modified residue" description="Phosphoserine" evidence="26 28">
    <location>
        <position position="1337"/>
    </location>
</feature>
<feature type="modified residue" description="Phosphothreonine" evidence="26">
    <location>
        <position position="1341"/>
    </location>
</feature>
<feature type="modified residue" description="Phosphoserine" evidence="24 27">
    <location>
        <position position="1371"/>
    </location>
</feature>
<feature type="modified residue" description="Phosphoserine" evidence="24">
    <location>
        <position position="1384"/>
    </location>
</feature>
<feature type="modified residue" description="Phosphoserine" evidence="28">
    <location>
        <position position="1433"/>
    </location>
</feature>
<feature type="modified residue" description="Phosphothreonine" evidence="25">
    <location>
        <position position="1454"/>
    </location>
</feature>
<feature type="modified residue" description="Phosphoserine" evidence="28 29">
    <location>
        <position position="1649"/>
    </location>
</feature>
<feature type="modified residue" description="Phosphothreonine" evidence="29">
    <location>
        <position position="1651"/>
    </location>
</feature>
<feature type="modified residue" description="Phosphoserine" evidence="28">
    <location>
        <position position="1701"/>
    </location>
</feature>
<feature type="modified residue" description="Phosphoserine" evidence="28">
    <location>
        <position position="1704"/>
    </location>
</feature>
<feature type="modified residue" description="Phosphoserine" evidence="2">
    <location>
        <position position="1912"/>
    </location>
</feature>
<feature type="splice variant" id="VSP_039485" description="In isoform 3." evidence="16">
    <original>R</original>
    <variation>RQLTQERGASQPSCCLPGQVRPAPTPRWK</variation>
    <location>
        <position position="746"/>
    </location>
</feature>
<feature type="splice variant" id="VSP_042600" description="In isoform 5." evidence="18">
    <original>Q</original>
    <variation>QQREKECSRTCPKKVITLSPPPTPPPCRAHGGQQTYRDLDADNRGKQSPHHERPEPEPPRRFFVDQWELSLSLRSSARPASPSSDSLRQKYIKMYTGGVSSLAEQIANQLQRKEQPKALLDKKEL</variation>
    <location>
        <position position="747"/>
    </location>
</feature>
<feature type="splice variant" id="VSP_042601" description="In isoform 5." evidence="18">
    <original>GVNGLEEPSIAKRLRGTPERIELENYRLSLRQAEALQEVPEETQAEHNLSSVLDTGAEEDVASSSSESEMEEEGEEEEE</original>
    <variation>LTSLFGWVARHSLGLCDKAKGMSQHLQSNISSFGQQVAQNPLDSFFMCQLLAFGVPFLYGLSEVLVQIRGEFHWQAVAQ</variation>
    <location>
        <begin position="871"/>
        <end position="949"/>
    </location>
</feature>
<feature type="splice variant" id="VSP_039486" description="In isoform 4." evidence="18 19">
    <original>SSSESEMEEEGEEEEEEPRLPPSDLGGVPWKEA</original>
    <variation>RDWVSPWLPRMVSNSWAQMIHPPQPPTVLGSQM</variation>
    <location>
        <begin position="934"/>
        <end position="966"/>
    </location>
</feature>
<feature type="splice variant" id="VSP_039487" description="In isoform 2 and isoform 3." evidence="16 17">
    <original>SSSESEMEEEGEEEE</original>
    <variation>RSARRAAGRPPATRP</variation>
    <location>
        <begin position="934"/>
        <end position="948"/>
    </location>
</feature>
<feature type="splice variant" id="VSP_039488" description="In isoform 2 and isoform 3." evidence="16 17">
    <location>
        <begin position="949"/>
        <end position="2002"/>
    </location>
</feature>
<feature type="splice variant" id="VSP_042602" description="In isoform 5." evidence="18">
    <location>
        <begin position="950"/>
        <end position="2002"/>
    </location>
</feature>
<feature type="splice variant" id="VSP_039489" description="In isoform 4." evidence="18 19">
    <location>
        <begin position="967"/>
        <end position="2002"/>
    </location>
</feature>
<feature type="sequence variant" id="VAR_059451" description="In dbSNP:rs11913706.">
    <original>P</original>
    <variation>A</variation>
    <location>
        <position position="11"/>
    </location>
</feature>
<feature type="sequence variant" id="VAR_059452" description="In dbSNP:rs2289719.">
    <original>R</original>
    <variation>Q</variation>
    <location>
        <position position="745"/>
    </location>
</feature>
<feature type="sequence variant" id="VAR_018263" description="In dbSNP:rs5992128.">
    <original>M</original>
    <variation>L</variation>
    <location>
        <position position="750"/>
    </location>
</feature>
<feature type="mutagenesis site" description="Abolishes Monooxygenase activity and impairs ability to control docking and fusion of exocytic carriers." evidence="11">
    <original>GAGPCG</original>
    <variation>WAWPCW</variation>
    <location>
        <begin position="93"/>
        <end position="98"/>
    </location>
</feature>
<feature type="mutagenesis site" description="In MICAL-3NLSMut; abolishes nuclear localization." evidence="12">
    <original>KRRK</original>
    <variation>AAAA</variation>
    <location>
        <begin position="680"/>
        <end position="683"/>
    </location>
</feature>
<feature type="sequence conflict" description="In Ref. 2; BX647382." evidence="20" ref="2">
    <original>G</original>
    <variation>D</variation>
    <location>
        <position position="414"/>
    </location>
</feature>
<feature type="sequence conflict" description="In Ref. 5; BAA74842." evidence="20" ref="5">
    <original>Q</original>
    <variation>R</variation>
    <location>
        <position position="1245"/>
    </location>
</feature>
<feature type="sequence conflict" description="In Ref. 4; AAH06562." evidence="20" ref="4">
    <original>E</original>
    <variation>V</variation>
    <location>
        <position position="1717"/>
    </location>
</feature>
<feature type="helix" evidence="32">
    <location>
        <begin position="11"/>
        <end position="20"/>
    </location>
</feature>
<feature type="helix" evidence="32">
    <location>
        <begin position="25"/>
        <end position="38"/>
    </location>
</feature>
<feature type="turn" evidence="32">
    <location>
        <begin position="46"/>
        <end position="48"/>
    </location>
</feature>
<feature type="helix" evidence="32">
    <location>
        <begin position="49"/>
        <end position="56"/>
    </location>
</feature>
<feature type="helix" evidence="32">
    <location>
        <begin position="60"/>
        <end position="73"/>
    </location>
</feature>
<feature type="helix" evidence="32">
    <location>
        <begin position="76"/>
        <end position="81"/>
    </location>
</feature>
<feature type="turn" evidence="32">
    <location>
        <begin position="82"/>
        <end position="86"/>
    </location>
</feature>
<feature type="strand" evidence="32">
    <location>
        <begin position="88"/>
        <end position="92"/>
    </location>
</feature>
<feature type="helix" evidence="32">
    <location>
        <begin position="96"/>
        <end position="107"/>
    </location>
</feature>
<feature type="strand" evidence="32">
    <location>
        <begin position="111"/>
        <end position="115"/>
    </location>
</feature>
<feature type="strand" evidence="32">
    <location>
        <begin position="126"/>
        <end position="128"/>
    </location>
</feature>
<feature type="helix" evidence="32">
    <location>
        <begin position="131"/>
        <end position="139"/>
    </location>
</feature>
<feature type="helix" evidence="32">
    <location>
        <begin position="142"/>
        <end position="145"/>
    </location>
</feature>
<feature type="turn" evidence="32">
    <location>
        <begin position="147"/>
        <end position="150"/>
    </location>
</feature>
<feature type="strand" evidence="32">
    <location>
        <begin position="156"/>
        <end position="158"/>
    </location>
</feature>
<feature type="helix" evidence="32">
    <location>
        <begin position="159"/>
        <end position="172"/>
    </location>
</feature>
<feature type="strand" evidence="32">
    <location>
        <begin position="176"/>
        <end position="180"/>
    </location>
</feature>
<feature type="strand" evidence="32">
    <location>
        <begin position="182"/>
        <end position="187"/>
    </location>
</feature>
<feature type="strand" evidence="32">
    <location>
        <begin position="201"/>
        <end position="206"/>
    </location>
</feature>
<feature type="helix" evidence="32">
    <location>
        <begin position="210"/>
        <end position="213"/>
    </location>
</feature>
<feature type="strand" evidence="32">
    <location>
        <begin position="217"/>
        <end position="221"/>
    </location>
</feature>
<feature type="helix" evidence="32">
    <location>
        <begin position="224"/>
        <end position="226"/>
    </location>
</feature>
<feature type="strand" evidence="32">
    <location>
        <begin position="234"/>
        <end position="238"/>
    </location>
</feature>
<feature type="strand" evidence="32">
    <location>
        <begin position="243"/>
        <end position="250"/>
    </location>
</feature>
<feature type="helix" evidence="32">
    <location>
        <begin position="255"/>
        <end position="259"/>
    </location>
</feature>
<feature type="helix" evidence="32">
    <location>
        <begin position="272"/>
        <end position="282"/>
    </location>
</feature>
<feature type="strand" evidence="32">
    <location>
        <begin position="286"/>
        <end position="303"/>
    </location>
</feature>
<feature type="helix" evidence="32">
    <location>
        <begin position="305"/>
        <end position="310"/>
    </location>
</feature>
<feature type="helix" evidence="32">
    <location>
        <begin position="321"/>
        <end position="324"/>
    </location>
</feature>
<feature type="helix" evidence="32">
    <location>
        <begin position="327"/>
        <end position="329"/>
    </location>
</feature>
<feature type="helix" evidence="32">
    <location>
        <begin position="332"/>
        <end position="346"/>
    </location>
</feature>
<feature type="turn" evidence="32">
    <location>
        <begin position="347"/>
        <end position="349"/>
    </location>
</feature>
<feature type="strand" evidence="32">
    <location>
        <begin position="362"/>
        <end position="364"/>
    </location>
</feature>
<feature type="strand" evidence="32">
    <location>
        <begin position="366"/>
        <end position="370"/>
    </location>
</feature>
<feature type="strand" evidence="32">
    <location>
        <begin position="372"/>
        <end position="378"/>
    </location>
</feature>
<feature type="strand" evidence="32">
    <location>
        <begin position="380"/>
        <end position="386"/>
    </location>
</feature>
<feature type="strand" evidence="32">
    <location>
        <begin position="389"/>
        <end position="395"/>
    </location>
</feature>
<feature type="helix" evidence="32">
    <location>
        <begin position="397"/>
        <end position="399"/>
    </location>
</feature>
<feature type="helix" evidence="32">
    <location>
        <begin position="405"/>
        <end position="407"/>
    </location>
</feature>
<feature type="helix" evidence="32">
    <location>
        <begin position="410"/>
        <end position="429"/>
    </location>
</feature>
<feature type="helix" evidence="32">
    <location>
        <begin position="434"/>
        <end position="445"/>
    </location>
</feature>
<feature type="helix" evidence="32">
    <location>
        <begin position="446"/>
        <end position="450"/>
    </location>
</feature>
<feature type="turn" evidence="32">
    <location>
        <begin position="453"/>
        <end position="455"/>
    </location>
</feature>
<feature type="helix" evidence="32">
    <location>
        <begin position="460"/>
        <end position="462"/>
    </location>
</feature>
<feature type="helix" evidence="32">
    <location>
        <begin position="467"/>
        <end position="469"/>
    </location>
</feature>
<feature type="helix" evidence="32">
    <location>
        <begin position="481"/>
        <end position="487"/>
    </location>
</feature>
<feature type="strand" evidence="30">
    <location>
        <begin position="519"/>
        <end position="521"/>
    </location>
</feature>
<feature type="helix" evidence="32">
    <location>
        <begin position="522"/>
        <end position="532"/>
    </location>
</feature>
<feature type="strand" evidence="30">
    <location>
        <begin position="535"/>
        <end position="537"/>
    </location>
</feature>
<feature type="strand" evidence="32">
    <location>
        <begin position="541"/>
        <end position="544"/>
    </location>
</feature>
<feature type="helix" evidence="32">
    <location>
        <begin position="545"/>
        <end position="547"/>
    </location>
</feature>
<feature type="helix" evidence="32">
    <location>
        <begin position="551"/>
        <end position="560"/>
    </location>
</feature>
<feature type="turn" evidence="30">
    <location>
        <begin position="562"/>
        <end position="564"/>
    </location>
</feature>
<feature type="turn" evidence="30">
    <location>
        <begin position="567"/>
        <end position="569"/>
    </location>
</feature>
<feature type="helix" evidence="32">
    <location>
        <begin position="575"/>
        <end position="590"/>
    </location>
</feature>
<feature type="helix" evidence="32">
    <location>
        <begin position="598"/>
        <end position="602"/>
    </location>
</feature>
<feature type="helix" evidence="32">
    <location>
        <begin position="609"/>
        <end position="623"/>
    </location>
</feature>
<feature type="helix" evidence="31">
    <location>
        <begin position="1842"/>
        <end position="1877"/>
    </location>
</feature>
<feature type="helix" evidence="31">
    <location>
        <begin position="1887"/>
        <end position="1889"/>
    </location>
</feature>
<feature type="helix" evidence="31">
    <location>
        <begin position="1892"/>
        <end position="1938"/>
    </location>
</feature>
<feature type="helix" evidence="31">
    <location>
        <begin position="1942"/>
        <end position="1944"/>
    </location>
</feature>
<feature type="helix" evidence="31">
    <location>
        <begin position="1947"/>
        <end position="1980"/>
    </location>
</feature>
<feature type="sequence conflict" description="In Ref. 2; BX647382." evidence="20" ref="2">
    <original>Q</original>
    <variation>R</variation>
    <location sequence="Q7RTP6-4">
        <position position="957"/>
    </location>
</feature>
<comment type="function">
    <text evidence="11 12">Monooxygenase that promotes depolymerization of F-actin by mediating oxidation of specific methionine residues on actin to form methionine-sulfoxide, resulting in actin filament disassembly and preventing repolymerization. In the absence of actin, it also functions as a NADPH oxidase producing H(2)O(2). Seems to act as Rab effector protein and plays a role in vesicle trafficking. Involved in exocytic vesicles tethering and fusion: the monooxygenase activity is required for this process and implicates RAB8A associated with exocytotic vesicles. Required for cytokinesis. Contributes to stabilization and/or maturation of the intercellular bridge independently of its monooxygenase activity. Promotes recruitment of Rab8 and ERC1 to the intercellular bridge, and together these proteins are proposed to function in timely abscission.</text>
</comment>
<comment type="catalytic activity">
    <reaction evidence="21">
        <text>L-methionyl-[F-actin] + NADPH + O2 + H(+) = L-methionyl-(R)-S-oxide-[F-actin] + NADP(+) + H2O</text>
        <dbReference type="Rhea" id="RHEA:51308"/>
        <dbReference type="Rhea" id="RHEA-COMP:12953"/>
        <dbReference type="Rhea" id="RHEA-COMP:12956"/>
        <dbReference type="ChEBI" id="CHEBI:15377"/>
        <dbReference type="ChEBI" id="CHEBI:15378"/>
        <dbReference type="ChEBI" id="CHEBI:15379"/>
        <dbReference type="ChEBI" id="CHEBI:16044"/>
        <dbReference type="ChEBI" id="CHEBI:45764"/>
        <dbReference type="ChEBI" id="CHEBI:57783"/>
        <dbReference type="ChEBI" id="CHEBI:58349"/>
        <dbReference type="EC" id="1.14.13.225"/>
    </reaction>
</comment>
<comment type="cofactor">
    <cofactor evidence="1">
        <name>FAD</name>
        <dbReference type="ChEBI" id="CHEBI:57692"/>
    </cofactor>
</comment>
<comment type="subunit">
    <text evidence="10 11 13 14 15">Interacts with RAB1B, RAB8A, RAB10, RAB13 and RAB15 (in their GTP-bound forms); binding to RAB1B is of low affinity compared to other Rab proteins; at least in case of RAB8A can bind 2 molecules of RAB8A simultaneously through a high and a low affinity binding site, respectively. Interacts with ERC1 and RAB8A; may bridge ERC1 with RAB8A. Interacts with KIF23 and ERC1; enhances the interaction between KIF23 and ERC1. Interacts with NINL isoform 2.</text>
</comment>
<comment type="interaction">
    <interactant intactId="EBI-13945605">
        <id>Q7RTP6-1</id>
    </interactant>
    <interactant intactId="EBI-306852">
        <id>Q02241</id>
        <label>KIF23</label>
    </interactant>
    <organismsDiffer>false</organismsDiffer>
    <experiments>8</experiments>
</comment>
<comment type="subcellular location">
    <subcellularLocation>
        <location evidence="10">Cytoplasm</location>
    </subcellularLocation>
    <subcellularLocation>
        <location evidence="11">Cytoplasm</location>
        <location evidence="11">Cell cortex</location>
    </subcellularLocation>
    <subcellularLocation>
        <location evidence="10">Cytoplasm</location>
        <location evidence="10">Cytoskeleton</location>
    </subcellularLocation>
    <subcellularLocation>
        <location evidence="12">Nucleus</location>
    </subcellularLocation>
    <subcellularLocation>
        <location evidence="14">Midbody</location>
    </subcellularLocation>
    <subcellularLocation>
        <location evidence="14">Cytoplasm</location>
        <location evidence="14">Cytoskeleton</location>
        <location evidence="14">Spindle</location>
    </subcellularLocation>
    <subcellularLocation>
        <location evidence="22">Cytoplasm</location>
        <location evidence="22">Cytoskeleton</location>
        <location evidence="22">Cilium basal body</location>
    </subcellularLocation>
    <text evidence="12">Mainly localizes in the nucleus.</text>
</comment>
<comment type="alternative products">
    <event type="alternative splicing"/>
    <isoform>
        <id>Q7RTP6-1</id>
        <name>1</name>
        <sequence type="displayed"/>
    </isoform>
    <isoform>
        <id>Q7RTP6-2</id>
        <name>2</name>
        <sequence type="described" ref="VSP_039487 VSP_039488"/>
    </isoform>
    <isoform>
        <id>Q7RTP6-3</id>
        <name>3</name>
        <sequence type="described" ref="VSP_039485 VSP_039487 VSP_039488"/>
    </isoform>
    <isoform>
        <id>Q7RTP6-4</id>
        <name>4</name>
        <sequence type="described" ref="VSP_039486 VSP_039489"/>
    </isoform>
    <isoform>
        <id>Q7RTP6-5</id>
        <name>5</name>
        <sequence type="described" ref="VSP_042600 VSP_042601 VSP_042602"/>
    </isoform>
    <text>Additional isoforms seem to exist.</text>
</comment>
<comment type="tissue specificity">
    <text evidence="10">Ubiquitous.</text>
</comment>
<comment type="domain">
    <text evidence="15">The bivalent Mical/EHBP Rab binding (bMERB) domain, mediates binding to predominantly Rab8, Rab10, Rab10, Rab13 and Rab15 (in their GTP-bound forms).</text>
</comment>
<comment type="similarity">
    <text evidence="20">Belongs to the Mical family.</text>
</comment>
<sequence length="2002" mass="224295">MEERKHETMNPAHVLFDRFVQATTCKGTLKAFQELCDHLELKPKDYRSFYHKLKSKLNYWKAKALWAKLDKRGSHKDYKKGKACTNTKCLIIGAGPCGLRTAIDLSLLGAKVVVIEKRDAFSRNNVLHLWPFTIHDLRGLGAKKFYGKFCAGAIDHISIRQLQLILLKVALILGIEIHVNVEFQGLIQPPEDQENERIGWRALVHPKTHPVSEYEFEVIIGGDGRRNTLEGFRRKEFRGKLAIAITANFINRNTTAEAKVEEISGVAFIFNQKFFQELREATGIDLENIVYYKDDTHYFVMTAKKQSLLDKGVILHDYADTELLLSRENVDQEALLSYAREAADFSTQQQLPSLDFAINHYGQPDVAMFDFTCMYASENAALVREQNGHQLLVALVGDSLLEPFWPMGTGIARGFLAAMDSAWMVRSWSLGTSPLEVLAERESIYRLLPQTTPENVSKNFSQYSIDPVTRYPNINVNFLRPSQVRHLYDTGETKDIHLEMESLVNSRTTPKLTRNESVARSSKLLGWCQRQTDGYAGVNVTDLTMSWKSGLALCAIIHRYRPDLIDFDSLDEQNVEKNNQLAFDIAEKELGISPIMTGKEMASVGEPDKLSMVMYLTQFYEMFKDSLPSSDTLDLNAEEKAVLIASTRSPISFLSKLGQTISRKRSPKDKKEKDLDGAGKRRKTSQSEEEEAPRGHRGERPTLVSTLTDRRMDVAVGNQNKVKYMATQLLAKFEENAPAQSIGIRRQGSMKKEFPQNLGGSDTCYFCQKRVYVMERLSAEGKFFHRSCFKCEYCATTLRLSAYAYDIEDGKFYCKPHYCYRLSGYAQRKRPAVAPLSGKEAKGPLQDGATTDANGRANAVASSTERTPGSGVNGLEEPSIAKRLRGTPERIELENYRLSLRQAEALQEVPEETQAEHNLSSVLDTGAEEDVASSSSESEMEEEGEEEEEEPRLPPSDLGGVPWKEAVRIHALLKGKSEEELEASKSFGPGNEEEEEEEEEYEEEEEEDYDEEEEESSEAGNQRLQQVMHAADPLEIQADVHWTHIREREEEERMAPASESSASGAPLDENDLEEDVDSEPAEIEGEAAEDGDPGDTGAELDDDQHWSDSPSDADRELRLPCPAEGEAELELRVSEDEEKLPASPKHQERGPSQATSPIRSPQESALLFIPVHSPSTEGPQLPPVPAATQEKSPEERLFPEPLLPKEKPKADAPSDLKAVHSPIRSQPVTLPEARTPVSPGSPQPQPPVAASTPPPSPLPICSQPQPSTEATVPSPTQSPIRFQPAPAKTSTPLAPLPVQSQSDTKDRLGSPLAVDEALRRSDLVEEFWMKSAEIRRSLGLTPVDRSKGPEPSFPTPAFRPVSLKSYSVEKSPQDEGLHLLKPLSIPKRLGLPKPEGEPLSLPTPRSPSDRELRSAQEERRELSSSSGLGLHGSSSNMKTLGSQSFNTSDSAMLTPPSSPPPPPPPGEEPATLRRKLREAEPNASVVPPPLPATWMRPPREPAQPPREEVRKSFVESVEEIPFADDVEDTYDDKTEDSSLQEKFFTPPSCWPRPEKPRHPPLAKENGRLPALEGTLQPQKRGLPLVSAEAKELAEERMRAREKSVKSQALRDAMARQLSRMQQMELASGAPRPRKASSAPSQGKERRPDSPTRPTLRGSEEPTLKHEATSEEVLSPPSDSGGPDGSFTSSEGSSGKSKKRSSLFSPRRNKKEKKSKGEGRPPEKPSSNLLEEAAAKPKSLWKSVFSGYKKDKKKKADDKSCPSTPSSGATVDSGKHRVLPVVRAELQLRRQLSFSEDSDLSSDDVLEKSSQKSRREPRTYTEEELNAKLTRRVQKAARRQAKQEELKRLHRAQIIQRQLQQVEERQRRLEERGVAVEKALRGEAGMGKKDDPKLMQEWFKLVQEKNAMVRYESELMIFARELELEDRQSRLQQELRERMAVEDHLKTEEELSEEKQILNEMLEVVEQRDSLVALLEEQRLREREEDKDLEAAMLSKGFSLNWS</sequence>
<protein>
    <recommendedName>
        <fullName>[F-actin]-monooxygenase MICAL3</fullName>
        <ecNumber evidence="21">1.14.13.225</ecNumber>
    </recommendedName>
    <alternativeName>
        <fullName>Molecule interacting with CasL protein 3</fullName>
        <shortName>MICAL-3</shortName>
    </alternativeName>
</protein>
<reference key="1">
    <citation type="journal article" date="2004" name="Genome Biol.">
        <title>A genome annotation-driven approach to cloning the human ORFeome.</title>
        <authorList>
            <person name="Collins J.E."/>
            <person name="Wright C.L."/>
            <person name="Edwards C.A."/>
            <person name="Davis M.P."/>
            <person name="Grinham J.A."/>
            <person name="Cole C.G."/>
            <person name="Goward M.E."/>
            <person name="Aguado B."/>
            <person name="Mallya M."/>
            <person name="Mokrab Y."/>
            <person name="Huckle E.J."/>
            <person name="Beare D.M."/>
            <person name="Dunham I."/>
        </authorList>
    </citation>
    <scope>NUCLEOTIDE SEQUENCE [LARGE SCALE MRNA] (ISOFORM 2)</scope>
</reference>
<reference key="2">
    <citation type="journal article" date="2007" name="BMC Genomics">
        <title>The full-ORF clone resource of the German cDNA consortium.</title>
        <authorList>
            <person name="Bechtel S."/>
            <person name="Rosenfelder H."/>
            <person name="Duda A."/>
            <person name="Schmidt C.P."/>
            <person name="Ernst U."/>
            <person name="Wellenreuther R."/>
            <person name="Mehrle A."/>
            <person name="Schuster C."/>
            <person name="Bahr A."/>
            <person name="Bloecker H."/>
            <person name="Heubner D."/>
            <person name="Hoerlein A."/>
            <person name="Michel G."/>
            <person name="Wedler H."/>
            <person name="Koehrer K."/>
            <person name="Ottenwaelder B."/>
            <person name="Poustka A."/>
            <person name="Wiemann S."/>
            <person name="Schupp I."/>
        </authorList>
    </citation>
    <scope>NUCLEOTIDE SEQUENCE [LARGE SCALE MRNA] (ISOFORM 4)</scope>
    <source>
        <tissue>Testis</tissue>
    </source>
</reference>
<reference key="3">
    <citation type="journal article" date="1999" name="Nature">
        <title>The DNA sequence of human chromosome 22.</title>
        <authorList>
            <person name="Dunham I."/>
            <person name="Hunt A.R."/>
            <person name="Collins J.E."/>
            <person name="Bruskiewich R."/>
            <person name="Beare D.M."/>
            <person name="Clamp M."/>
            <person name="Smink L.J."/>
            <person name="Ainscough R."/>
            <person name="Almeida J.P."/>
            <person name="Babbage A.K."/>
            <person name="Bagguley C."/>
            <person name="Bailey J."/>
            <person name="Barlow K.F."/>
            <person name="Bates K.N."/>
            <person name="Beasley O.P."/>
            <person name="Bird C.P."/>
            <person name="Blakey S.E."/>
            <person name="Bridgeman A.M."/>
            <person name="Buck D."/>
            <person name="Burgess J."/>
            <person name="Burrill W.D."/>
            <person name="Burton J."/>
            <person name="Carder C."/>
            <person name="Carter N.P."/>
            <person name="Chen Y."/>
            <person name="Clark G."/>
            <person name="Clegg S.M."/>
            <person name="Cobley V.E."/>
            <person name="Cole C.G."/>
            <person name="Collier R.E."/>
            <person name="Connor R."/>
            <person name="Conroy D."/>
            <person name="Corby N.R."/>
            <person name="Coville G.J."/>
            <person name="Cox A.V."/>
            <person name="Davis J."/>
            <person name="Dawson E."/>
            <person name="Dhami P.D."/>
            <person name="Dockree C."/>
            <person name="Dodsworth S.J."/>
            <person name="Durbin R.M."/>
            <person name="Ellington A.G."/>
            <person name="Evans K.L."/>
            <person name="Fey J.M."/>
            <person name="Fleming K."/>
            <person name="French L."/>
            <person name="Garner A.A."/>
            <person name="Gilbert J.G.R."/>
            <person name="Goward M.E."/>
            <person name="Grafham D.V."/>
            <person name="Griffiths M.N.D."/>
            <person name="Hall C."/>
            <person name="Hall R.E."/>
            <person name="Hall-Tamlyn G."/>
            <person name="Heathcott R.W."/>
            <person name="Ho S."/>
            <person name="Holmes S."/>
            <person name="Hunt S.E."/>
            <person name="Jones M.C."/>
            <person name="Kershaw J."/>
            <person name="Kimberley A.M."/>
            <person name="King A."/>
            <person name="Laird G.K."/>
            <person name="Langford C.F."/>
            <person name="Leversha M.A."/>
            <person name="Lloyd C."/>
            <person name="Lloyd D.M."/>
            <person name="Martyn I.D."/>
            <person name="Mashreghi-Mohammadi M."/>
            <person name="Matthews L.H."/>
            <person name="Mccann O.T."/>
            <person name="Mcclay J."/>
            <person name="Mclaren S."/>
            <person name="McMurray A.A."/>
            <person name="Milne S.A."/>
            <person name="Mortimore B.J."/>
            <person name="Odell C.N."/>
            <person name="Pavitt R."/>
            <person name="Pearce A.V."/>
            <person name="Pearson D."/>
            <person name="Phillimore B.J.C.T."/>
            <person name="Phillips S.H."/>
            <person name="Plumb R.W."/>
            <person name="Ramsay H."/>
            <person name="Ramsey Y."/>
            <person name="Rogers L."/>
            <person name="Ross M.T."/>
            <person name="Scott C.E."/>
            <person name="Sehra H.K."/>
            <person name="Skuce C.D."/>
            <person name="Smalley S."/>
            <person name="Smith M.L."/>
            <person name="Soderlund C."/>
            <person name="Spragon L."/>
            <person name="Steward C.A."/>
            <person name="Sulston J.E."/>
            <person name="Swann R.M."/>
            <person name="Vaudin M."/>
            <person name="Wall M."/>
            <person name="Wallis J.M."/>
            <person name="Whiteley M.N."/>
            <person name="Willey D.L."/>
            <person name="Williams L."/>
            <person name="Williams S.A."/>
            <person name="Williamson H."/>
            <person name="Wilmer T.E."/>
            <person name="Wilming L."/>
            <person name="Wright C.L."/>
            <person name="Hubbard T."/>
            <person name="Bentley D.R."/>
            <person name="Beck S."/>
            <person name="Rogers J."/>
            <person name="Shimizu N."/>
            <person name="Minoshima S."/>
            <person name="Kawasaki K."/>
            <person name="Sasaki T."/>
            <person name="Asakawa S."/>
            <person name="Kudoh J."/>
            <person name="Shintani A."/>
            <person name="Shibuya K."/>
            <person name="Yoshizaki Y."/>
            <person name="Aoki N."/>
            <person name="Mitsuyama S."/>
            <person name="Roe B.A."/>
            <person name="Chen F."/>
            <person name="Chu L."/>
            <person name="Crabtree J."/>
            <person name="Deschamps S."/>
            <person name="Do A."/>
            <person name="Do T."/>
            <person name="Dorman A."/>
            <person name="Fang F."/>
            <person name="Fu Y."/>
            <person name="Hu P."/>
            <person name="Hua A."/>
            <person name="Kenton S."/>
            <person name="Lai H."/>
            <person name="Lao H.I."/>
            <person name="Lewis J."/>
            <person name="Lewis S."/>
            <person name="Lin S.-P."/>
            <person name="Loh P."/>
            <person name="Malaj E."/>
            <person name="Nguyen T."/>
            <person name="Pan H."/>
            <person name="Phan S."/>
            <person name="Qi S."/>
            <person name="Qian Y."/>
            <person name="Ray L."/>
            <person name="Ren Q."/>
            <person name="Shaull S."/>
            <person name="Sloan D."/>
            <person name="Song L."/>
            <person name="Wang Q."/>
            <person name="Wang Y."/>
            <person name="Wang Z."/>
            <person name="White J."/>
            <person name="Willingham D."/>
            <person name="Wu H."/>
            <person name="Yao Z."/>
            <person name="Zhan M."/>
            <person name="Zhang G."/>
            <person name="Chissoe S."/>
            <person name="Murray J."/>
            <person name="Miller N."/>
            <person name="Minx P."/>
            <person name="Fulton R."/>
            <person name="Johnson D."/>
            <person name="Bemis G."/>
            <person name="Bentley D."/>
            <person name="Bradshaw H."/>
            <person name="Bourne S."/>
            <person name="Cordes M."/>
            <person name="Du Z."/>
            <person name="Fulton L."/>
            <person name="Goela D."/>
            <person name="Graves T."/>
            <person name="Hawkins J."/>
            <person name="Hinds K."/>
            <person name="Kemp K."/>
            <person name="Latreille P."/>
            <person name="Layman D."/>
            <person name="Ozersky P."/>
            <person name="Rohlfing T."/>
            <person name="Scheet P."/>
            <person name="Walker C."/>
            <person name="Wamsley A."/>
            <person name="Wohldmann P."/>
            <person name="Pepin K."/>
            <person name="Nelson J."/>
            <person name="Korf I."/>
            <person name="Bedell J.A."/>
            <person name="Hillier L.W."/>
            <person name="Mardis E."/>
            <person name="Waterston R."/>
            <person name="Wilson R."/>
            <person name="Emanuel B.S."/>
            <person name="Shaikh T."/>
            <person name="Kurahashi H."/>
            <person name="Saitta S."/>
            <person name="Budarf M.L."/>
            <person name="McDermid H.E."/>
            <person name="Johnson A."/>
            <person name="Wong A.C.C."/>
            <person name="Morrow B.E."/>
            <person name="Edelmann L."/>
            <person name="Kim U.J."/>
            <person name="Shizuya H."/>
            <person name="Simon M.I."/>
            <person name="Dumanski J.P."/>
            <person name="Peyrard M."/>
            <person name="Kedra D."/>
            <person name="Seroussi E."/>
            <person name="Fransson I."/>
            <person name="Tapia I."/>
            <person name="Bruder C.E."/>
            <person name="O'Brien K.P."/>
            <person name="Wilkinson P."/>
            <person name="Bodenteich A."/>
            <person name="Hartman K."/>
            <person name="Hu X."/>
            <person name="Khan A.S."/>
            <person name="Lane L."/>
            <person name="Tilahun Y."/>
            <person name="Wright H."/>
        </authorList>
    </citation>
    <scope>NUCLEOTIDE SEQUENCE [LARGE SCALE GENOMIC DNA]</scope>
</reference>
<reference key="4">
    <citation type="journal article" date="2004" name="Genome Res.">
        <title>The status, quality, and expansion of the NIH full-length cDNA project: the Mammalian Gene Collection (MGC).</title>
        <authorList>
            <consortium name="The MGC Project Team"/>
        </authorList>
    </citation>
    <scope>NUCLEOTIDE SEQUENCE [LARGE SCALE MRNA] (ISOFORM 5)</scope>
    <scope>NUCLEOTIDE SEQUENCE [LARGE SCALE MRNA] OF 1626-2002 (ISOFORM 1)</scope>
    <scope>NUCLEOTIDE SEQUENCE [LARGE SCALE MRNA] OF 682-966 (ISOFORM 4)</scope>
    <source>
        <tissue>Lymph</tissue>
        <tissue>Pancreas</tissue>
    </source>
</reference>
<reference key="5">
    <citation type="journal article" date="2000" name="DNA Res.">
        <title>Prediction of the coding sequences of unidentified human genes. XVI. The complete sequences of 150 new cDNA clones from brain which code for large proteins in vitro.</title>
        <authorList>
            <person name="Nagase T."/>
            <person name="Kikuno R."/>
            <person name="Ishikawa K."/>
            <person name="Hirosawa M."/>
            <person name="Ohara O."/>
        </authorList>
    </citation>
    <scope>NUCLEOTIDE SEQUENCE [LARGE SCALE MRNA] OF 166-2002 (ISOFORM 3)</scope>
    <scope>NUCLEOTIDE SEQUENCE [LARGE SCALE MRNA] OF 1014-2002 (ISOFORM 1)</scope>
    <source>
        <tissue>Brain</tissue>
    </source>
</reference>
<reference key="6">
    <citation type="journal article" date="2002" name="Cell">
        <title>MICALs, a family of conserved flavoprotein oxidoreductases, function in plexin-mediated axonal repulsion.</title>
        <authorList>
            <person name="Terman J.R."/>
            <person name="Mao T."/>
            <person name="Pasterkamp R.J."/>
            <person name="Yu H.-H."/>
            <person name="Kolodkin A.L."/>
        </authorList>
    </citation>
    <scope>IDENTIFICATION (ISOFORM 3 AND PARTIAL ISOFORM 1)</scope>
</reference>
<reference key="7">
    <citation type="journal article" date="2005" name="Biochem. Biophys. Res. Commun.">
        <title>The MICAL proteins and rab1: a possible link to the cytoskeleton?</title>
        <authorList>
            <person name="Fischer J."/>
            <person name="Weide T."/>
            <person name="Barnekow A."/>
        </authorList>
    </citation>
    <scope>INTERACTION WITH RAB1B</scope>
    <scope>SUBCELLULAR LOCATION</scope>
    <scope>ALTERNATIVE SPLICING</scope>
    <scope>TISSUE SPECIFICITY</scope>
</reference>
<reference key="8">
    <citation type="journal article" date="2006" name="Cell">
        <title>Global, in vivo, and site-specific phosphorylation dynamics in signaling networks.</title>
        <authorList>
            <person name="Olsen J.V."/>
            <person name="Blagoev B."/>
            <person name="Gnad F."/>
            <person name="Macek B."/>
            <person name="Kumar C."/>
            <person name="Mortensen P."/>
            <person name="Mann M."/>
        </authorList>
    </citation>
    <scope>PHOSPHORYLATION [LARGE SCALE ANALYSIS] AT SER-1310</scope>
    <scope>IDENTIFICATION BY MASS SPECTROMETRY [LARGE SCALE ANALYSIS]</scope>
    <source>
        <tissue>Cervix carcinoma</tissue>
    </source>
</reference>
<reference key="9">
    <citation type="journal article" date="2008" name="Proc. Natl. Acad. Sci. U.S.A.">
        <title>A quantitative atlas of mitotic phosphorylation.</title>
        <authorList>
            <person name="Dephoure N."/>
            <person name="Zhou C."/>
            <person name="Villen J."/>
            <person name="Beausoleil S.A."/>
            <person name="Bakalarski C.E."/>
            <person name="Elledge S.J."/>
            <person name="Gygi S.P."/>
        </authorList>
    </citation>
    <scope>PHOSPHORYLATION [LARGE SCALE ANALYSIS] AT SER-649; THR-887; SER-1371 AND SER-1384</scope>
    <scope>IDENTIFICATION BY MASS SPECTROMETRY [LARGE SCALE ANALYSIS]</scope>
    <source>
        <tissue>Cervix carcinoma</tissue>
    </source>
</reference>
<reference key="10">
    <citation type="journal article" date="2009" name="Sci. Signal.">
        <title>Quantitative phosphoproteomic analysis of T cell receptor signaling reveals system-wide modulation of protein-protein interactions.</title>
        <authorList>
            <person name="Mayya V."/>
            <person name="Lundgren D.H."/>
            <person name="Hwang S.-I."/>
            <person name="Rezaul K."/>
            <person name="Wu L."/>
            <person name="Eng J.K."/>
            <person name="Rodionov V."/>
            <person name="Han D.K."/>
        </authorList>
    </citation>
    <scope>PHOSPHORYLATION [LARGE SCALE ANALYSIS] AT SER-1310 AND THR-1454</scope>
    <scope>IDENTIFICATION BY MASS SPECTROMETRY [LARGE SCALE ANALYSIS]</scope>
    <source>
        <tissue>Leukemic T-cell</tissue>
    </source>
</reference>
<reference key="11">
    <citation type="journal article" date="2010" name="Sci. Signal.">
        <title>Quantitative phosphoproteomics reveals widespread full phosphorylation site occupancy during mitosis.</title>
        <authorList>
            <person name="Olsen J.V."/>
            <person name="Vermeulen M."/>
            <person name="Santamaria A."/>
            <person name="Kumar C."/>
            <person name="Miller M.L."/>
            <person name="Jensen L.J."/>
            <person name="Gnad F."/>
            <person name="Cox J."/>
            <person name="Jensen T.S."/>
            <person name="Nigg E.A."/>
            <person name="Brunak S."/>
            <person name="Mann M."/>
        </authorList>
    </citation>
    <scope>PHOSPHORYLATION [LARGE SCALE ANALYSIS] AT SER-649; SER-1337 AND THR-1341</scope>
    <scope>IDENTIFICATION BY MASS SPECTROMETRY [LARGE SCALE ANALYSIS]</scope>
    <source>
        <tissue>Cervix carcinoma</tissue>
    </source>
</reference>
<reference key="12">
    <citation type="journal article" date="2011" name="Curr. Biol.">
        <title>Rab6, Rab8, and MICAL3 cooperate in controlling docking and fusion of exocytotic carriers.</title>
        <authorList>
            <person name="Grigoriev I."/>
            <person name="Yu K.L."/>
            <person name="Martinez-Sanchez E."/>
            <person name="Serra-Marques A."/>
            <person name="Smal I."/>
            <person name="Meijering E."/>
            <person name="Demmers J."/>
            <person name="Peranen J."/>
            <person name="Pasterkamp R.J."/>
            <person name="van der Sluijs P."/>
            <person name="Hoogenraad C.C."/>
            <person name="Akhmanova A."/>
        </authorList>
    </citation>
    <scope>FUNCTION</scope>
    <scope>INTERACTION WITH ERC1 AND RAB8A</scope>
    <scope>SUBCELLULAR LOCATION</scope>
    <scope>MUTAGENESIS OF 93-GLY--GLY-98</scope>
</reference>
<reference key="13">
    <citation type="journal article" date="2011" name="Sci. Signal.">
        <title>System-wide temporal characterization of the proteome and phosphoproteome of human embryonic stem cell differentiation.</title>
        <authorList>
            <person name="Rigbolt K.T."/>
            <person name="Prokhorova T.A."/>
            <person name="Akimov V."/>
            <person name="Henningsen J."/>
            <person name="Johansen P.T."/>
            <person name="Kratchmarova I."/>
            <person name="Kassem M."/>
            <person name="Mann M."/>
            <person name="Olsen J.V."/>
            <person name="Blagoev B."/>
        </authorList>
    </citation>
    <scope>PHOSPHORYLATION [LARGE SCALE ANALYSIS] AT SER-1371</scope>
    <scope>IDENTIFICATION BY MASS SPECTROMETRY [LARGE SCALE ANALYSIS]</scope>
</reference>
<reference key="14">
    <citation type="journal article" date="2013" name="J. Proteome Res.">
        <title>Toward a comprehensive characterization of a human cancer cell phosphoproteome.</title>
        <authorList>
            <person name="Zhou H."/>
            <person name="Di Palma S."/>
            <person name="Preisinger C."/>
            <person name="Peng M."/>
            <person name="Polat A.N."/>
            <person name="Heck A.J."/>
            <person name="Mohammed S."/>
        </authorList>
    </citation>
    <scope>PHOSPHORYLATION [LARGE SCALE ANALYSIS] AT SER-649; THR-887; SER-1143; SER-1310; SER-1337; SER-1433; SER-1649; SER-1701 AND SER-1704</scope>
    <scope>IDENTIFICATION BY MASS SPECTROMETRY [LARGE SCALE ANALYSIS]</scope>
    <source>
        <tissue>Cervix carcinoma</tissue>
        <tissue>Erythroleukemia</tissue>
    </source>
</reference>
<reference key="15">
    <citation type="journal article" date="2014" name="Cell">
        <title>Redox modification of nuclear actin by MICAL-2 regulates SRF signaling.</title>
        <authorList>
            <person name="Lundquist M.R."/>
            <person name="Storaska A.J."/>
            <person name="Liu T.C."/>
            <person name="Larsen S.D."/>
            <person name="Evans T."/>
            <person name="Neubig R.R."/>
            <person name="Jaffrey S.R."/>
        </authorList>
    </citation>
    <scope>FUNCTION</scope>
    <scope>CATALYTIC ACTIVITY</scope>
    <scope>SUBCELLULAR LOCATION</scope>
    <scope>NUCLEAR LOCALIZATION SIGNAL</scope>
    <scope>MUTAGENESIS OF 680-LYS--LYS-683</scope>
</reference>
<reference key="16">
    <citation type="journal article" date="2014" name="J. Proteomics">
        <title>An enzyme assisted RP-RPLC approach for in-depth analysis of human liver phosphoproteome.</title>
        <authorList>
            <person name="Bian Y."/>
            <person name="Song C."/>
            <person name="Cheng K."/>
            <person name="Dong M."/>
            <person name="Wang F."/>
            <person name="Huang J."/>
            <person name="Sun D."/>
            <person name="Wang L."/>
            <person name="Ye M."/>
            <person name="Zou H."/>
        </authorList>
    </citation>
    <scope>PHOSPHORYLATION [LARGE SCALE ANALYSIS] AT SER-1134; SER-1160; SER-1274; THR-1276; SER-1278; SER-1649 AND THR-1651</scope>
    <scope>IDENTIFICATION BY MASS SPECTROMETRY [LARGE SCALE ANALYSIS]</scope>
    <source>
        <tissue>Liver</tissue>
    </source>
</reference>
<reference key="17">
    <citation type="journal article" date="2015" name="PLoS Genet.">
        <title>The ciliopathy protein CC2D2A associates with NINL and functions in RAB8-MICAL3-regulated vesicle trafficking.</title>
        <authorList>
            <person name="Bachmann-Gagescu R."/>
            <person name="Dona M."/>
            <person name="Hetterschijt L."/>
            <person name="Tonnaer E."/>
            <person name="Peters T."/>
            <person name="de Vrieze E."/>
            <person name="Mans D.A."/>
            <person name="van Beersum S.E."/>
            <person name="Phelps I.G."/>
            <person name="Arts H.H."/>
            <person name="Keunen J.E."/>
            <person name="Ueffing M."/>
            <person name="Roepman R."/>
            <person name="Boldt K."/>
            <person name="Doherty D."/>
            <person name="Moens C.B."/>
            <person name="Neuhauss S.C."/>
            <person name="Kremer H."/>
            <person name="van Wijk E."/>
        </authorList>
    </citation>
    <scope>INTERACTION WITH NINL</scope>
    <scope>SUBCELLULAR LOCATION</scope>
</reference>
<reference key="18">
    <citation type="journal article" date="2016" name="J. Biol. Chem.">
        <title>MICAL3 flavoprotein monooxygenase forms a complex with centralspindlin and regulates cytokinesis.</title>
        <authorList>
            <person name="Liu Q."/>
            <person name="Liu F."/>
            <person name="Yu K.L."/>
            <person name="Tas R."/>
            <person name="Grigoriev I."/>
            <person name="Remmelzwaal S."/>
            <person name="Serra-Marques A."/>
            <person name="Kapitein L.C."/>
            <person name="Heck A.J."/>
            <person name="Akhmanova A."/>
        </authorList>
    </citation>
    <scope>FUNCTION</scope>
    <scope>INTERACTION WITH KIF23</scope>
    <scope>SUBCELLULAR LOCATION</scope>
</reference>
<reference key="19">
    <citation type="submission" date="2006-06" db="PDB data bank">
        <title>Solution structure of the CH domain from human MICAL-3 protein.</title>
        <authorList>
            <consortium name="RIKEN structural genomics initiative (RSGI)"/>
        </authorList>
    </citation>
    <scope>STRUCTURE BY NMR OF 515-630</scope>
</reference>
<reference key="20">
    <citation type="journal article" date="2016" name="Elife">
        <title>bMERB domains are bivalent Rab8 family effectors evolved by gene duplication.</title>
        <authorList>
            <person name="Rai A."/>
            <person name="Oprisko A."/>
            <person name="Campos J."/>
            <person name="Fu Y."/>
            <person name="Friese T."/>
            <person name="Itzen A."/>
            <person name="Goody R.S."/>
            <person name="Gazdag E.M."/>
            <person name="Muller M.P."/>
        </authorList>
    </citation>
    <scope>X-RAY CRYSTALLOGRAPHY (2.70 ANGSTROMS) OF 1841-1990</scope>
    <scope>INTERACTION WITH RAB1B; RAB8A; RAB10; RAB13 AND RAB15</scope>
    <scope>DOMAIN</scope>
</reference>
<evidence type="ECO:0000250" key="1"/>
<evidence type="ECO:0000250" key="2">
    <source>
        <dbReference type="UniProtKB" id="Q8CJ19"/>
    </source>
</evidence>
<evidence type="ECO:0000250" key="3">
    <source>
        <dbReference type="UniProtKB" id="Q8TDZ2"/>
    </source>
</evidence>
<evidence type="ECO:0000250" key="4">
    <source>
        <dbReference type="UniProtKB" id="Q8VDP3"/>
    </source>
</evidence>
<evidence type="ECO:0000255" key="5"/>
<evidence type="ECO:0000255" key="6">
    <source>
        <dbReference type="PROSITE-ProRule" id="PRU00044"/>
    </source>
</evidence>
<evidence type="ECO:0000255" key="7">
    <source>
        <dbReference type="PROSITE-ProRule" id="PRU00125"/>
    </source>
</evidence>
<evidence type="ECO:0000255" key="8">
    <source>
        <dbReference type="PROSITE-ProRule" id="PRU01195"/>
    </source>
</evidence>
<evidence type="ECO:0000256" key="9">
    <source>
        <dbReference type="SAM" id="MobiDB-lite"/>
    </source>
</evidence>
<evidence type="ECO:0000269" key="10">
    <source>
    </source>
</evidence>
<evidence type="ECO:0000269" key="11">
    <source>
    </source>
</evidence>
<evidence type="ECO:0000269" key="12">
    <source>
    </source>
</evidence>
<evidence type="ECO:0000269" key="13">
    <source>
    </source>
</evidence>
<evidence type="ECO:0000269" key="14">
    <source>
    </source>
</evidence>
<evidence type="ECO:0000269" key="15">
    <source>
    </source>
</evidence>
<evidence type="ECO:0000303" key="16">
    <source>
    </source>
</evidence>
<evidence type="ECO:0000303" key="17">
    <source>
    </source>
</evidence>
<evidence type="ECO:0000303" key="18">
    <source>
    </source>
</evidence>
<evidence type="ECO:0000303" key="19">
    <source>
    </source>
</evidence>
<evidence type="ECO:0000305" key="20"/>
<evidence type="ECO:0000305" key="21">
    <source>
    </source>
</evidence>
<evidence type="ECO:0000305" key="22">
    <source>
    </source>
</evidence>
<evidence type="ECO:0007744" key="23">
    <source>
    </source>
</evidence>
<evidence type="ECO:0007744" key="24">
    <source>
    </source>
</evidence>
<evidence type="ECO:0007744" key="25">
    <source>
    </source>
</evidence>
<evidence type="ECO:0007744" key="26">
    <source>
    </source>
</evidence>
<evidence type="ECO:0007744" key="27">
    <source>
    </source>
</evidence>
<evidence type="ECO:0007744" key="28">
    <source>
    </source>
</evidence>
<evidence type="ECO:0007744" key="29">
    <source>
    </source>
</evidence>
<evidence type="ECO:0007829" key="30">
    <source>
        <dbReference type="PDB" id="2D88"/>
    </source>
</evidence>
<evidence type="ECO:0007829" key="31">
    <source>
        <dbReference type="PDB" id="5SZG"/>
    </source>
</evidence>
<evidence type="ECO:0007829" key="32">
    <source>
        <dbReference type="PDB" id="6ICI"/>
    </source>
</evidence>
<dbReference type="EC" id="1.14.13.225" evidence="21"/>
<dbReference type="EMBL" id="CR456364">
    <property type="protein sequence ID" value="CAG30250.1"/>
    <property type="molecule type" value="mRNA"/>
</dbReference>
<dbReference type="EMBL" id="BX647382">
    <property type="status" value="NOT_ANNOTATED_CDS"/>
    <property type="molecule type" value="mRNA"/>
</dbReference>
<dbReference type="EMBL" id="AC016026">
    <property type="status" value="NOT_ANNOTATED_CDS"/>
    <property type="molecule type" value="Genomic_DNA"/>
</dbReference>
<dbReference type="EMBL" id="AC016027">
    <property type="status" value="NOT_ANNOTATED_CDS"/>
    <property type="molecule type" value="Genomic_DNA"/>
</dbReference>
<dbReference type="EMBL" id="BC006562">
    <property type="protein sequence ID" value="AAH06562.2"/>
    <property type="molecule type" value="mRNA"/>
</dbReference>
<dbReference type="EMBL" id="BC085009">
    <property type="protein sequence ID" value="AAH85009.1"/>
    <property type="molecule type" value="mRNA"/>
</dbReference>
<dbReference type="EMBL" id="BC157876">
    <property type="protein sequence ID" value="AAI57877.1"/>
    <property type="molecule type" value="mRNA"/>
</dbReference>
<dbReference type="EMBL" id="BC171887">
    <property type="protein sequence ID" value="AAI71887.1"/>
    <property type="molecule type" value="mRNA"/>
</dbReference>
<dbReference type="EMBL" id="AB020626">
    <property type="protein sequence ID" value="BAA74842.1"/>
    <property type="molecule type" value="mRNA"/>
</dbReference>
<dbReference type="EMBL" id="AB037785">
    <property type="protein sequence ID" value="BAA92602.1"/>
    <property type="molecule type" value="mRNA"/>
</dbReference>
<dbReference type="EMBL" id="BK000464">
    <property type="protein sequence ID" value="DAA01343.1"/>
    <property type="molecule type" value="mRNA"/>
</dbReference>
<dbReference type="EMBL" id="BK000465">
    <property type="protein sequence ID" value="DAA01344.1"/>
    <property type="molecule type" value="mRNA"/>
</dbReference>
<dbReference type="CCDS" id="CCDS46659.1">
    <molecule id="Q7RTP6-1"/>
</dbReference>
<dbReference type="CCDS" id="CCDS46660.1">
    <molecule id="Q7RTP6-4"/>
</dbReference>
<dbReference type="CCDS" id="CCDS46661.1">
    <molecule id="Q7RTP6-5"/>
</dbReference>
<dbReference type="RefSeq" id="NP_001116203.1">
    <molecule id="Q7RTP6-4"/>
    <property type="nucleotide sequence ID" value="NM_001122731.2"/>
</dbReference>
<dbReference type="RefSeq" id="NP_001129476.1">
    <molecule id="Q7RTP6-5"/>
    <property type="nucleotide sequence ID" value="NM_001136004.3"/>
</dbReference>
<dbReference type="RefSeq" id="NP_056056.2">
    <molecule id="Q7RTP6-1"/>
    <property type="nucleotide sequence ID" value="NM_015241.3"/>
</dbReference>
<dbReference type="RefSeq" id="XP_005261319.1">
    <property type="nucleotide sequence ID" value="XM_005261262.3"/>
</dbReference>
<dbReference type="PDB" id="2D88">
    <property type="method" value="NMR"/>
    <property type="chains" value="A=518-625"/>
</dbReference>
<dbReference type="PDB" id="5SZG">
    <property type="method" value="X-ray"/>
    <property type="resolution" value="2.70 A"/>
    <property type="chains" value="A/B=1841-1990"/>
</dbReference>
<dbReference type="PDB" id="6ICI">
    <property type="method" value="X-ray"/>
    <property type="resolution" value="2.30 A"/>
    <property type="chains" value="A=1-700"/>
</dbReference>
<dbReference type="PDBsum" id="2D88"/>
<dbReference type="PDBsum" id="5SZG"/>
<dbReference type="PDBsum" id="6ICI"/>
<dbReference type="BMRB" id="Q7RTP6"/>
<dbReference type="SMR" id="Q7RTP6"/>
<dbReference type="BioGRID" id="121609">
    <property type="interactions" value="88"/>
</dbReference>
<dbReference type="FunCoup" id="Q7RTP6">
    <property type="interactions" value="1798"/>
</dbReference>
<dbReference type="IntAct" id="Q7RTP6">
    <property type="interactions" value="52"/>
</dbReference>
<dbReference type="MINT" id="Q7RTP6"/>
<dbReference type="STRING" id="9606.ENSP00000416015"/>
<dbReference type="GlyCosmos" id="Q7RTP6">
    <property type="glycosylation" value="2 sites, 1 glycan"/>
</dbReference>
<dbReference type="GlyGen" id="Q7RTP6">
    <property type="glycosylation" value="7 sites, 1 O-linked glycan (4 sites)"/>
</dbReference>
<dbReference type="iPTMnet" id="Q7RTP6"/>
<dbReference type="PhosphoSitePlus" id="Q7RTP6"/>
<dbReference type="SwissPalm" id="Q7RTP6"/>
<dbReference type="BioMuta" id="MICAL3"/>
<dbReference type="DMDM" id="300669653"/>
<dbReference type="jPOST" id="Q7RTP6"/>
<dbReference type="MassIVE" id="Q7RTP6"/>
<dbReference type="PaxDb" id="9606-ENSP00000416015"/>
<dbReference type="PeptideAtlas" id="Q7RTP6"/>
<dbReference type="ProteomicsDB" id="68879">
    <molecule id="Q7RTP6-1"/>
</dbReference>
<dbReference type="ProteomicsDB" id="68880">
    <molecule id="Q7RTP6-2"/>
</dbReference>
<dbReference type="ProteomicsDB" id="68881">
    <molecule id="Q7RTP6-3"/>
</dbReference>
<dbReference type="ProteomicsDB" id="68882">
    <molecule id="Q7RTP6-4"/>
</dbReference>
<dbReference type="ProteomicsDB" id="68883">
    <molecule id="Q7RTP6-5"/>
</dbReference>
<dbReference type="Pumba" id="Q7RTP6"/>
<dbReference type="Antibodypedia" id="34804">
    <property type="antibodies" value="23 antibodies from 9 providers"/>
</dbReference>
<dbReference type="DNASU" id="57553"/>
<dbReference type="Ensembl" id="ENST00000383094.7">
    <molecule id="Q7RTP6-2"/>
    <property type="protein sequence ID" value="ENSP00000372574.3"/>
    <property type="gene ID" value="ENSG00000243156.9"/>
</dbReference>
<dbReference type="Ensembl" id="ENST00000400561.6">
    <molecule id="Q7RTP6-4"/>
    <property type="protein sequence ID" value="ENSP00000383406.2"/>
    <property type="gene ID" value="ENSG00000243156.9"/>
</dbReference>
<dbReference type="Ensembl" id="ENST00000414725.6">
    <molecule id="Q7RTP6-3"/>
    <property type="protein sequence ID" value="ENSP00000391827.2"/>
    <property type="gene ID" value="ENSG00000243156.9"/>
</dbReference>
<dbReference type="Ensembl" id="ENST00000441493.7">
    <molecule id="Q7RTP6-1"/>
    <property type="protein sequence ID" value="ENSP00000416015.2"/>
    <property type="gene ID" value="ENSG00000243156.9"/>
</dbReference>
<dbReference type="Ensembl" id="ENST00000585038.1">
    <molecule id="Q7RTP6-5"/>
    <property type="protein sequence ID" value="ENSP00000462033.1"/>
    <property type="gene ID" value="ENSG00000243156.9"/>
</dbReference>
<dbReference type="GeneID" id="57553"/>
<dbReference type="KEGG" id="hsa:57553"/>
<dbReference type="MANE-Select" id="ENST00000441493.7">
    <property type="protein sequence ID" value="ENSP00000416015.2"/>
    <property type="RefSeq nucleotide sequence ID" value="NM_015241.3"/>
    <property type="RefSeq protein sequence ID" value="NP_056056.2"/>
</dbReference>
<dbReference type="UCSC" id="uc002zng.5">
    <molecule id="Q7RTP6-1"/>
    <property type="organism name" value="human"/>
</dbReference>
<dbReference type="AGR" id="HGNC:24694"/>
<dbReference type="CTD" id="57553"/>
<dbReference type="DisGeNET" id="57553"/>
<dbReference type="GeneCards" id="MICAL3"/>
<dbReference type="HGNC" id="HGNC:24694">
    <property type="gene designation" value="MICAL3"/>
</dbReference>
<dbReference type="HPA" id="ENSG00000243156">
    <property type="expression patterns" value="Low tissue specificity"/>
</dbReference>
<dbReference type="MIM" id="608882">
    <property type="type" value="gene"/>
</dbReference>
<dbReference type="neXtProt" id="NX_Q7RTP6"/>
<dbReference type="OpenTargets" id="ENSG00000243156"/>
<dbReference type="PharmGKB" id="PA142671454"/>
<dbReference type="VEuPathDB" id="HostDB:ENSG00000243156"/>
<dbReference type="eggNOG" id="KOG1700">
    <property type="taxonomic scope" value="Eukaryota"/>
</dbReference>
<dbReference type="GeneTree" id="ENSGT00940000155580"/>
<dbReference type="HOGENOM" id="CLU_000329_1_1_1"/>
<dbReference type="InParanoid" id="Q7RTP6"/>
<dbReference type="OMA" id="QWCESSP"/>
<dbReference type="OrthoDB" id="20799at2759"/>
<dbReference type="PAN-GO" id="Q7RTP6">
    <property type="GO annotations" value="0 GO annotations based on evolutionary models"/>
</dbReference>
<dbReference type="PhylomeDB" id="Q7RTP6"/>
<dbReference type="TreeFam" id="TF324129"/>
<dbReference type="PathwayCommons" id="Q7RTP6"/>
<dbReference type="SABIO-RK" id="Q7RTP6"/>
<dbReference type="SignaLink" id="Q7RTP6"/>
<dbReference type="BioGRID-ORCS" id="57553">
    <property type="hits" value="12 hits in 1157 CRISPR screens"/>
</dbReference>
<dbReference type="ChiTaRS" id="MICAL3">
    <property type="organism name" value="human"/>
</dbReference>
<dbReference type="EvolutionaryTrace" id="Q7RTP6"/>
<dbReference type="GeneWiki" id="MICAL3"/>
<dbReference type="GenomeRNAi" id="57553"/>
<dbReference type="Pharos" id="Q7RTP6">
    <property type="development level" value="Tbio"/>
</dbReference>
<dbReference type="PRO" id="PR:Q7RTP6"/>
<dbReference type="Proteomes" id="UP000005640">
    <property type="component" value="Chromosome 22"/>
</dbReference>
<dbReference type="RNAct" id="Q7RTP6">
    <property type="molecule type" value="protein"/>
</dbReference>
<dbReference type="Bgee" id="ENSG00000243156">
    <property type="expression patterns" value="Expressed in sural nerve and 124 other cell types or tissues"/>
</dbReference>
<dbReference type="ExpressionAtlas" id="Q7RTP6">
    <property type="expression patterns" value="baseline and differential"/>
</dbReference>
<dbReference type="GO" id="GO:0005938">
    <property type="term" value="C:cell cortex"/>
    <property type="evidence" value="ECO:0007669"/>
    <property type="project" value="UniProtKB-SubCell"/>
</dbReference>
<dbReference type="GO" id="GO:0042995">
    <property type="term" value="C:cell projection"/>
    <property type="evidence" value="ECO:0007669"/>
    <property type="project" value="UniProtKB-KW"/>
</dbReference>
<dbReference type="GO" id="GO:0005829">
    <property type="term" value="C:cytosol"/>
    <property type="evidence" value="ECO:0000314"/>
    <property type="project" value="HPA"/>
</dbReference>
<dbReference type="GO" id="GO:0090543">
    <property type="term" value="C:Flemming body"/>
    <property type="evidence" value="ECO:0000314"/>
    <property type="project" value="HPA"/>
</dbReference>
<dbReference type="GO" id="GO:0045171">
    <property type="term" value="C:intercellular bridge"/>
    <property type="evidence" value="ECO:0000314"/>
    <property type="project" value="HPA"/>
</dbReference>
<dbReference type="GO" id="GO:0005654">
    <property type="term" value="C:nucleoplasm"/>
    <property type="evidence" value="ECO:0000314"/>
    <property type="project" value="HPA"/>
</dbReference>
<dbReference type="GO" id="GO:0005634">
    <property type="term" value="C:nucleus"/>
    <property type="evidence" value="ECO:0000314"/>
    <property type="project" value="UniProtKB"/>
</dbReference>
<dbReference type="GO" id="GO:0005886">
    <property type="term" value="C:plasma membrane"/>
    <property type="evidence" value="ECO:0000314"/>
    <property type="project" value="HPA"/>
</dbReference>
<dbReference type="GO" id="GO:0005819">
    <property type="term" value="C:spindle"/>
    <property type="evidence" value="ECO:0007669"/>
    <property type="project" value="UniProtKB-SubCell"/>
</dbReference>
<dbReference type="GO" id="GO:0003779">
    <property type="term" value="F:actin binding"/>
    <property type="evidence" value="ECO:0000314"/>
    <property type="project" value="UniProtKB"/>
</dbReference>
<dbReference type="GO" id="GO:0120501">
    <property type="term" value="F:F-actin monooxygenase activity"/>
    <property type="evidence" value="ECO:0007669"/>
    <property type="project" value="UniProtKB-EC"/>
</dbReference>
<dbReference type="GO" id="GO:0071949">
    <property type="term" value="F:FAD binding"/>
    <property type="evidence" value="ECO:0000250"/>
    <property type="project" value="UniProtKB"/>
</dbReference>
<dbReference type="GO" id="GO:0046872">
    <property type="term" value="F:metal ion binding"/>
    <property type="evidence" value="ECO:0007669"/>
    <property type="project" value="UniProtKB-KW"/>
</dbReference>
<dbReference type="GO" id="GO:0060090">
    <property type="term" value="F:molecular adaptor activity"/>
    <property type="evidence" value="ECO:0000269"/>
    <property type="project" value="DisProt"/>
</dbReference>
<dbReference type="GO" id="GO:0016709">
    <property type="term" value="F:oxidoreductase activity, acting on paired donors, with incorporation or reduction of molecular oxygen, NAD(P)H as one donor, and incorporation of one atom of oxygen"/>
    <property type="evidence" value="ECO:0000250"/>
    <property type="project" value="UniProtKB"/>
</dbReference>
<dbReference type="GO" id="GO:0030042">
    <property type="term" value="P:actin filament depolymerization"/>
    <property type="evidence" value="ECO:0000314"/>
    <property type="project" value="UniProtKB"/>
</dbReference>
<dbReference type="GO" id="GO:0051301">
    <property type="term" value="P:cell division"/>
    <property type="evidence" value="ECO:0007669"/>
    <property type="project" value="UniProtKB-KW"/>
</dbReference>
<dbReference type="GO" id="GO:0007010">
    <property type="term" value="P:cytoskeleton organization"/>
    <property type="evidence" value="ECO:0000314"/>
    <property type="project" value="UniProtKB"/>
</dbReference>
<dbReference type="GO" id="GO:0006887">
    <property type="term" value="P:exocytosis"/>
    <property type="evidence" value="ECO:0007669"/>
    <property type="project" value="UniProtKB-KW"/>
</dbReference>
<dbReference type="CDD" id="cd21251">
    <property type="entry name" value="CH_MICAL3"/>
    <property type="match status" value="1"/>
</dbReference>
<dbReference type="CDD" id="cd09439">
    <property type="entry name" value="LIM_Mical"/>
    <property type="match status" value="1"/>
</dbReference>
<dbReference type="DisProt" id="DP02396"/>
<dbReference type="FunFam" id="3.50.50.60:FF:000004">
    <property type="entry name" value="protein-methionine sulfoxide oxidase MICAL2 isoform X1"/>
    <property type="match status" value="1"/>
</dbReference>
<dbReference type="FunFam" id="1.10.418.10:FF:000026">
    <property type="entry name" value="protein-methionine sulfoxide oxidase MICAL3 isoform X1"/>
    <property type="match status" value="1"/>
</dbReference>
<dbReference type="FunFam" id="2.10.110.10:FF:000043">
    <property type="entry name" value="protein-methionine sulfoxide oxidase MICAL3 isoform X2"/>
    <property type="match status" value="1"/>
</dbReference>
<dbReference type="Gene3D" id="1.10.418.10">
    <property type="entry name" value="Calponin-like domain"/>
    <property type="match status" value="1"/>
</dbReference>
<dbReference type="Gene3D" id="2.10.110.10">
    <property type="entry name" value="Cysteine Rich Protein"/>
    <property type="match status" value="1"/>
</dbReference>
<dbReference type="Gene3D" id="3.50.50.60">
    <property type="entry name" value="FAD/NAD(P)-binding domain"/>
    <property type="match status" value="1"/>
</dbReference>
<dbReference type="InterPro" id="IPR022735">
    <property type="entry name" value="bMERB_dom"/>
</dbReference>
<dbReference type="InterPro" id="IPR001715">
    <property type="entry name" value="CH_dom"/>
</dbReference>
<dbReference type="InterPro" id="IPR036872">
    <property type="entry name" value="CH_dom_sf"/>
</dbReference>
<dbReference type="InterPro" id="IPR050540">
    <property type="entry name" value="F-actin_Monoox_Mical"/>
</dbReference>
<dbReference type="InterPro" id="IPR002938">
    <property type="entry name" value="FAD-bd"/>
</dbReference>
<dbReference type="InterPro" id="IPR036188">
    <property type="entry name" value="FAD/NAD-bd_sf"/>
</dbReference>
<dbReference type="InterPro" id="IPR001781">
    <property type="entry name" value="Znf_LIM"/>
</dbReference>
<dbReference type="PANTHER" id="PTHR23167:SF51">
    <property type="entry name" value="[F-ACTIN]-MONOOXYGENASE MICAL3"/>
    <property type="match status" value="1"/>
</dbReference>
<dbReference type="PANTHER" id="PTHR23167">
    <property type="entry name" value="CALPONIN HOMOLOGY DOMAIN-CONTAINING PROTEIN DDB_G0272472-RELATED"/>
    <property type="match status" value="1"/>
</dbReference>
<dbReference type="Pfam" id="PF12130">
    <property type="entry name" value="bMERB_dom"/>
    <property type="match status" value="1"/>
</dbReference>
<dbReference type="Pfam" id="PF00307">
    <property type="entry name" value="CH"/>
    <property type="match status" value="1"/>
</dbReference>
<dbReference type="Pfam" id="PF01494">
    <property type="entry name" value="FAD_binding_3"/>
    <property type="match status" value="1"/>
</dbReference>
<dbReference type="Pfam" id="PF00412">
    <property type="entry name" value="LIM"/>
    <property type="match status" value="1"/>
</dbReference>
<dbReference type="Pfam" id="PF25413">
    <property type="entry name" value="Rossman_Mical"/>
    <property type="match status" value="1"/>
</dbReference>
<dbReference type="PRINTS" id="PR00420">
    <property type="entry name" value="RNGMNOXGNASE"/>
</dbReference>
<dbReference type="SMART" id="SM00033">
    <property type="entry name" value="CH"/>
    <property type="match status" value="1"/>
</dbReference>
<dbReference type="SMART" id="SM01203">
    <property type="entry name" value="DUF3585"/>
    <property type="match status" value="1"/>
</dbReference>
<dbReference type="SMART" id="SM00132">
    <property type="entry name" value="LIM"/>
    <property type="match status" value="1"/>
</dbReference>
<dbReference type="SUPFAM" id="SSF47576">
    <property type="entry name" value="Calponin-homology domain, CH-domain"/>
    <property type="match status" value="1"/>
</dbReference>
<dbReference type="SUPFAM" id="SSF51905">
    <property type="entry name" value="FAD/NAD(P)-binding domain"/>
    <property type="match status" value="1"/>
</dbReference>
<dbReference type="SUPFAM" id="SSF57716">
    <property type="entry name" value="Glucocorticoid receptor-like (DNA-binding domain)"/>
    <property type="match status" value="1"/>
</dbReference>
<dbReference type="PROSITE" id="PS51848">
    <property type="entry name" value="BMERB"/>
    <property type="match status" value="1"/>
</dbReference>
<dbReference type="PROSITE" id="PS50021">
    <property type="entry name" value="CH"/>
    <property type="match status" value="1"/>
</dbReference>
<dbReference type="PROSITE" id="PS00478">
    <property type="entry name" value="LIM_DOMAIN_1"/>
    <property type="match status" value="1"/>
</dbReference>
<dbReference type="PROSITE" id="PS50023">
    <property type="entry name" value="LIM_DOMAIN_2"/>
    <property type="match status" value="1"/>
</dbReference>
<organism>
    <name type="scientific">Homo sapiens</name>
    <name type="common">Human</name>
    <dbReference type="NCBI Taxonomy" id="9606"/>
    <lineage>
        <taxon>Eukaryota</taxon>
        <taxon>Metazoa</taxon>
        <taxon>Chordata</taxon>
        <taxon>Craniata</taxon>
        <taxon>Vertebrata</taxon>
        <taxon>Euteleostomi</taxon>
        <taxon>Mammalia</taxon>
        <taxon>Eutheria</taxon>
        <taxon>Euarchontoglires</taxon>
        <taxon>Primates</taxon>
        <taxon>Haplorrhini</taxon>
        <taxon>Catarrhini</taxon>
        <taxon>Hominidae</taxon>
        <taxon>Homo</taxon>
    </lineage>
</organism>